<feature type="chain" id="PRO_0000137528" description="Inorganic pyrophosphatase">
    <location>
        <begin position="1"/>
        <end position="173"/>
    </location>
</feature>
<feature type="binding site" evidence="1">
    <location>
        <position position="29"/>
    </location>
    <ligand>
        <name>substrate</name>
    </ligand>
</feature>
<feature type="binding site" evidence="1">
    <location>
        <position position="43"/>
    </location>
    <ligand>
        <name>substrate</name>
    </ligand>
</feature>
<feature type="binding site" evidence="1">
    <location>
        <position position="55"/>
    </location>
    <ligand>
        <name>substrate</name>
    </ligand>
</feature>
<feature type="binding site" evidence="1">
    <location>
        <position position="65"/>
    </location>
    <ligand>
        <name>Mg(2+)</name>
        <dbReference type="ChEBI" id="CHEBI:18420"/>
        <label>1</label>
    </ligand>
</feature>
<feature type="binding site" evidence="1">
    <location>
        <position position="70"/>
    </location>
    <ligand>
        <name>Mg(2+)</name>
        <dbReference type="ChEBI" id="CHEBI:18420"/>
        <label>1</label>
    </ligand>
</feature>
<feature type="binding site" evidence="1">
    <location>
        <position position="70"/>
    </location>
    <ligand>
        <name>Mg(2+)</name>
        <dbReference type="ChEBI" id="CHEBI:18420"/>
        <label>2</label>
    </ligand>
</feature>
<feature type="binding site" evidence="1">
    <location>
        <position position="102"/>
    </location>
    <ligand>
        <name>Mg(2+)</name>
        <dbReference type="ChEBI" id="CHEBI:18420"/>
        <label>1</label>
    </ligand>
</feature>
<feature type="binding site" evidence="1">
    <location>
        <position position="141"/>
    </location>
    <ligand>
        <name>substrate</name>
    </ligand>
</feature>
<organism>
    <name type="scientific">Rickettsia conorii (strain ATCC VR-613 / Malish 7)</name>
    <dbReference type="NCBI Taxonomy" id="272944"/>
    <lineage>
        <taxon>Bacteria</taxon>
        <taxon>Pseudomonadati</taxon>
        <taxon>Pseudomonadota</taxon>
        <taxon>Alphaproteobacteria</taxon>
        <taxon>Rickettsiales</taxon>
        <taxon>Rickettsiaceae</taxon>
        <taxon>Rickettsieae</taxon>
        <taxon>Rickettsia</taxon>
        <taxon>spotted fever group</taxon>
    </lineage>
</organism>
<dbReference type="EC" id="3.6.1.1" evidence="1"/>
<dbReference type="EMBL" id="AE006914">
    <property type="protein sequence ID" value="AAL03435.1"/>
    <property type="molecule type" value="Genomic_DNA"/>
</dbReference>
<dbReference type="PIR" id="A97812">
    <property type="entry name" value="A97812"/>
</dbReference>
<dbReference type="RefSeq" id="WP_004998013.1">
    <property type="nucleotide sequence ID" value="NC_003103.1"/>
</dbReference>
<dbReference type="SMR" id="Q92H74"/>
<dbReference type="GeneID" id="95361402"/>
<dbReference type="KEGG" id="rco:RC0897"/>
<dbReference type="HOGENOM" id="CLU_073198_1_0_5"/>
<dbReference type="Proteomes" id="UP000000816">
    <property type="component" value="Chromosome"/>
</dbReference>
<dbReference type="GO" id="GO:0005737">
    <property type="term" value="C:cytoplasm"/>
    <property type="evidence" value="ECO:0007669"/>
    <property type="project" value="UniProtKB-SubCell"/>
</dbReference>
<dbReference type="GO" id="GO:0004427">
    <property type="term" value="F:inorganic diphosphate phosphatase activity"/>
    <property type="evidence" value="ECO:0007669"/>
    <property type="project" value="UniProtKB-UniRule"/>
</dbReference>
<dbReference type="GO" id="GO:0000287">
    <property type="term" value="F:magnesium ion binding"/>
    <property type="evidence" value="ECO:0007669"/>
    <property type="project" value="UniProtKB-UniRule"/>
</dbReference>
<dbReference type="GO" id="GO:0006796">
    <property type="term" value="P:phosphate-containing compound metabolic process"/>
    <property type="evidence" value="ECO:0007669"/>
    <property type="project" value="InterPro"/>
</dbReference>
<dbReference type="CDD" id="cd00412">
    <property type="entry name" value="pyrophosphatase"/>
    <property type="match status" value="1"/>
</dbReference>
<dbReference type="FunFam" id="3.90.80.10:FF:000003">
    <property type="entry name" value="Inorganic pyrophosphatase"/>
    <property type="match status" value="1"/>
</dbReference>
<dbReference type="Gene3D" id="3.90.80.10">
    <property type="entry name" value="Inorganic pyrophosphatase"/>
    <property type="match status" value="1"/>
</dbReference>
<dbReference type="HAMAP" id="MF_00209">
    <property type="entry name" value="Inorganic_PPase"/>
    <property type="match status" value="1"/>
</dbReference>
<dbReference type="InterPro" id="IPR008162">
    <property type="entry name" value="Pyrophosphatase"/>
</dbReference>
<dbReference type="InterPro" id="IPR036649">
    <property type="entry name" value="Pyrophosphatase_sf"/>
</dbReference>
<dbReference type="NCBIfam" id="NF002317">
    <property type="entry name" value="PRK01250.1"/>
    <property type="match status" value="1"/>
</dbReference>
<dbReference type="PANTHER" id="PTHR10286">
    <property type="entry name" value="INORGANIC PYROPHOSPHATASE"/>
    <property type="match status" value="1"/>
</dbReference>
<dbReference type="Pfam" id="PF00719">
    <property type="entry name" value="Pyrophosphatase"/>
    <property type="match status" value="1"/>
</dbReference>
<dbReference type="SUPFAM" id="SSF50324">
    <property type="entry name" value="Inorganic pyrophosphatase"/>
    <property type="match status" value="1"/>
</dbReference>
<dbReference type="PROSITE" id="PS00387">
    <property type="entry name" value="PPASE"/>
    <property type="match status" value="1"/>
</dbReference>
<keyword id="KW-0963">Cytoplasm</keyword>
<keyword id="KW-0378">Hydrolase</keyword>
<keyword id="KW-0460">Magnesium</keyword>
<keyword id="KW-0479">Metal-binding</keyword>
<name>IPYR_RICCN</name>
<accession>Q92H74</accession>
<gene>
    <name evidence="1" type="primary">ppa</name>
    <name type="ordered locus">RC0897</name>
</gene>
<comment type="function">
    <text evidence="1">Catalyzes the hydrolysis of inorganic pyrophosphate (PPi) forming two phosphate ions.</text>
</comment>
<comment type="catalytic activity">
    <reaction evidence="1">
        <text>diphosphate + H2O = 2 phosphate + H(+)</text>
        <dbReference type="Rhea" id="RHEA:24576"/>
        <dbReference type="ChEBI" id="CHEBI:15377"/>
        <dbReference type="ChEBI" id="CHEBI:15378"/>
        <dbReference type="ChEBI" id="CHEBI:33019"/>
        <dbReference type="ChEBI" id="CHEBI:43474"/>
        <dbReference type="EC" id="3.6.1.1"/>
    </reaction>
</comment>
<comment type="cofactor">
    <cofactor evidence="1">
        <name>Mg(2+)</name>
        <dbReference type="ChEBI" id="CHEBI:18420"/>
    </cofactor>
</comment>
<comment type="subunit">
    <text evidence="1">Homohexamer.</text>
</comment>
<comment type="subcellular location">
    <subcellularLocation>
        <location evidence="1">Cytoplasm</location>
    </subcellularLocation>
</comment>
<comment type="similarity">
    <text evidence="1">Belongs to the PPase family.</text>
</comment>
<sequence length="173" mass="19618">MFIDKIKAKANNYEINVIIEIPMNSGPIKYEFDKESGAIFVDRFMQTTMSYPCNYGFIPHTLSNDGDPVDVLVVAHHPVVPGSVIKCRAVGVLMMEDESGLDEKIIAVPTSKLDITFDHIKELDDLCDMLKQRIVHFFEHYKDLEKGKWVKVTGWENKSKADALINEGIDRVS</sequence>
<proteinExistence type="inferred from homology"/>
<protein>
    <recommendedName>
        <fullName evidence="1">Inorganic pyrophosphatase</fullName>
        <ecNumber evidence="1">3.6.1.1</ecNumber>
    </recommendedName>
    <alternativeName>
        <fullName evidence="1">Pyrophosphate phospho-hydrolase</fullName>
        <shortName evidence="1">PPase</shortName>
    </alternativeName>
</protein>
<reference key="1">
    <citation type="journal article" date="2001" name="Science">
        <title>Mechanisms of evolution in Rickettsia conorii and R. prowazekii.</title>
        <authorList>
            <person name="Ogata H."/>
            <person name="Audic S."/>
            <person name="Renesto-Audiffren P."/>
            <person name="Fournier P.-E."/>
            <person name="Barbe V."/>
            <person name="Samson D."/>
            <person name="Roux V."/>
            <person name="Cossart P."/>
            <person name="Weissenbach J."/>
            <person name="Claverie J.-M."/>
            <person name="Raoult D."/>
        </authorList>
    </citation>
    <scope>NUCLEOTIDE SEQUENCE [LARGE SCALE GENOMIC DNA]</scope>
    <source>
        <strain>ATCC VR-613 / Malish 7</strain>
    </source>
</reference>
<evidence type="ECO:0000255" key="1">
    <source>
        <dbReference type="HAMAP-Rule" id="MF_00209"/>
    </source>
</evidence>